<proteinExistence type="inferred from homology"/>
<keyword id="KW-0997">Cell inner membrane</keyword>
<keyword id="KW-1003">Cell membrane</keyword>
<keyword id="KW-0472">Membrane</keyword>
<gene>
    <name type="ordered locus">Shewmr7_4033</name>
</gene>
<evidence type="ECO:0000255" key="1">
    <source>
        <dbReference type="HAMAP-Rule" id="MF_00386"/>
    </source>
</evidence>
<sequence length="84" mass="9431">MAQTQSPLQWLATTFIRGYQIFISPLLGPRCRFNPTCSHYAIEAIKVHGTAKGCWFALKRILKCHPLHPGGSDPVPPKNDRCNK</sequence>
<dbReference type="EMBL" id="CP000444">
    <property type="protein sequence ID" value="ABI45010.1"/>
    <property type="molecule type" value="Genomic_DNA"/>
</dbReference>
<dbReference type="KEGG" id="shm:Shewmr7_4033"/>
<dbReference type="HOGENOM" id="CLU_144811_5_2_6"/>
<dbReference type="GO" id="GO:0005886">
    <property type="term" value="C:plasma membrane"/>
    <property type="evidence" value="ECO:0007669"/>
    <property type="project" value="UniProtKB-SubCell"/>
</dbReference>
<dbReference type="HAMAP" id="MF_00386">
    <property type="entry name" value="UPF0161_YidD"/>
    <property type="match status" value="1"/>
</dbReference>
<dbReference type="InterPro" id="IPR002696">
    <property type="entry name" value="Membr_insert_effic_factor_YidD"/>
</dbReference>
<dbReference type="NCBIfam" id="TIGR00278">
    <property type="entry name" value="membrane protein insertion efficiency factor YidD"/>
    <property type="match status" value="1"/>
</dbReference>
<dbReference type="PANTHER" id="PTHR33383">
    <property type="entry name" value="MEMBRANE PROTEIN INSERTION EFFICIENCY FACTOR-RELATED"/>
    <property type="match status" value="1"/>
</dbReference>
<dbReference type="PANTHER" id="PTHR33383:SF1">
    <property type="entry name" value="MEMBRANE PROTEIN INSERTION EFFICIENCY FACTOR-RELATED"/>
    <property type="match status" value="1"/>
</dbReference>
<dbReference type="Pfam" id="PF01809">
    <property type="entry name" value="YidD"/>
    <property type="match status" value="1"/>
</dbReference>
<dbReference type="SMART" id="SM01234">
    <property type="entry name" value="Haemolytic"/>
    <property type="match status" value="1"/>
</dbReference>
<protein>
    <recommendedName>
        <fullName evidence="1">Putative membrane protein insertion efficiency factor</fullName>
    </recommendedName>
</protein>
<reference key="1">
    <citation type="submission" date="2006-08" db="EMBL/GenBank/DDBJ databases">
        <title>Complete sequence of chromosome 1 of Shewanella sp. MR-7.</title>
        <authorList>
            <person name="Copeland A."/>
            <person name="Lucas S."/>
            <person name="Lapidus A."/>
            <person name="Barry K."/>
            <person name="Detter J.C."/>
            <person name="Glavina del Rio T."/>
            <person name="Hammon N."/>
            <person name="Israni S."/>
            <person name="Dalin E."/>
            <person name="Tice H."/>
            <person name="Pitluck S."/>
            <person name="Kiss H."/>
            <person name="Brettin T."/>
            <person name="Bruce D."/>
            <person name="Han C."/>
            <person name="Tapia R."/>
            <person name="Gilna P."/>
            <person name="Schmutz J."/>
            <person name="Larimer F."/>
            <person name="Land M."/>
            <person name="Hauser L."/>
            <person name="Kyrpides N."/>
            <person name="Mikhailova N."/>
            <person name="Nealson K."/>
            <person name="Konstantinidis K."/>
            <person name="Klappenbach J."/>
            <person name="Tiedje J."/>
            <person name="Richardson P."/>
        </authorList>
    </citation>
    <scope>NUCLEOTIDE SEQUENCE [LARGE SCALE GENOMIC DNA]</scope>
    <source>
        <strain>MR-7</strain>
    </source>
</reference>
<accession>Q0HPE5</accession>
<organism>
    <name type="scientific">Shewanella sp. (strain MR-7)</name>
    <dbReference type="NCBI Taxonomy" id="60481"/>
    <lineage>
        <taxon>Bacteria</taxon>
        <taxon>Pseudomonadati</taxon>
        <taxon>Pseudomonadota</taxon>
        <taxon>Gammaproteobacteria</taxon>
        <taxon>Alteromonadales</taxon>
        <taxon>Shewanellaceae</taxon>
        <taxon>Shewanella</taxon>
    </lineage>
</organism>
<name>YIDD_SHESR</name>
<feature type="chain" id="PRO_1000013131" description="Putative membrane protein insertion efficiency factor">
    <location>
        <begin position="1"/>
        <end position="84"/>
    </location>
</feature>
<comment type="function">
    <text evidence="1">Could be involved in insertion of integral membrane proteins into the membrane.</text>
</comment>
<comment type="subcellular location">
    <subcellularLocation>
        <location evidence="1">Cell inner membrane</location>
        <topology evidence="1">Peripheral membrane protein</topology>
        <orientation evidence="1">Cytoplasmic side</orientation>
    </subcellularLocation>
</comment>
<comment type="similarity">
    <text evidence="1">Belongs to the UPF0161 family.</text>
</comment>